<keyword id="KW-0963">Cytoplasm</keyword>
<keyword id="KW-0312">Gluconeogenesis</keyword>
<keyword id="KW-0324">Glycolysis</keyword>
<keyword id="KW-0413">Isomerase</keyword>
<keyword id="KW-1185">Reference proteome</keyword>
<dbReference type="EC" id="5.3.1.9" evidence="1"/>
<dbReference type="EMBL" id="X12360">
    <property type="protein sequence ID" value="CAA30923.1"/>
    <property type="molecule type" value="Genomic_DNA"/>
</dbReference>
<dbReference type="EMBL" id="CR382125">
    <property type="protein sequence ID" value="CAH00100.1"/>
    <property type="molecule type" value="Genomic_DNA"/>
</dbReference>
<dbReference type="PIR" id="S01414">
    <property type="entry name" value="NUVKL"/>
</dbReference>
<dbReference type="RefSeq" id="XP_455013.1">
    <property type="nucleotide sequence ID" value="XM_455013.1"/>
</dbReference>
<dbReference type="SMR" id="P12341"/>
<dbReference type="FunCoup" id="P12341">
    <property type="interactions" value="1247"/>
</dbReference>
<dbReference type="STRING" id="284590.P12341"/>
<dbReference type="PaxDb" id="284590-P12341"/>
<dbReference type="KEGG" id="kla:KLLA0_E23519g"/>
<dbReference type="eggNOG" id="KOG2446">
    <property type="taxonomic scope" value="Eukaryota"/>
</dbReference>
<dbReference type="HOGENOM" id="CLU_017947_3_1_1"/>
<dbReference type="InParanoid" id="P12341"/>
<dbReference type="OMA" id="DWYRQLW"/>
<dbReference type="UniPathway" id="UPA00109">
    <property type="reaction ID" value="UER00181"/>
</dbReference>
<dbReference type="Proteomes" id="UP000000598">
    <property type="component" value="Chromosome E"/>
</dbReference>
<dbReference type="GO" id="GO:0005829">
    <property type="term" value="C:cytosol"/>
    <property type="evidence" value="ECO:0007669"/>
    <property type="project" value="UniProtKB-SubCell"/>
</dbReference>
<dbReference type="GO" id="GO:0097367">
    <property type="term" value="F:carbohydrate derivative binding"/>
    <property type="evidence" value="ECO:0007669"/>
    <property type="project" value="InterPro"/>
</dbReference>
<dbReference type="GO" id="GO:0004347">
    <property type="term" value="F:glucose-6-phosphate isomerase activity"/>
    <property type="evidence" value="ECO:0007669"/>
    <property type="project" value="UniProtKB-EC"/>
</dbReference>
<dbReference type="GO" id="GO:0048029">
    <property type="term" value="F:monosaccharide binding"/>
    <property type="evidence" value="ECO:0007669"/>
    <property type="project" value="TreeGrafter"/>
</dbReference>
<dbReference type="GO" id="GO:0006094">
    <property type="term" value="P:gluconeogenesis"/>
    <property type="evidence" value="ECO:0007669"/>
    <property type="project" value="UniProtKB-KW"/>
</dbReference>
<dbReference type="GO" id="GO:0051156">
    <property type="term" value="P:glucose 6-phosphate metabolic process"/>
    <property type="evidence" value="ECO:0007669"/>
    <property type="project" value="TreeGrafter"/>
</dbReference>
<dbReference type="GO" id="GO:0006096">
    <property type="term" value="P:glycolytic process"/>
    <property type="evidence" value="ECO:0007669"/>
    <property type="project" value="UniProtKB-UniPathway"/>
</dbReference>
<dbReference type="CDD" id="cd05015">
    <property type="entry name" value="SIS_PGI_1"/>
    <property type="match status" value="1"/>
</dbReference>
<dbReference type="CDD" id="cd05016">
    <property type="entry name" value="SIS_PGI_2"/>
    <property type="match status" value="1"/>
</dbReference>
<dbReference type="FunFam" id="1.10.1390.10:FF:000001">
    <property type="entry name" value="Glucose-6-phosphate isomerase"/>
    <property type="match status" value="1"/>
</dbReference>
<dbReference type="FunFam" id="3.40.50.10490:FF:000004">
    <property type="entry name" value="Glucose-6-phosphate isomerase"/>
    <property type="match status" value="1"/>
</dbReference>
<dbReference type="Gene3D" id="1.10.1390.10">
    <property type="match status" value="1"/>
</dbReference>
<dbReference type="Gene3D" id="3.40.50.10490">
    <property type="entry name" value="Glucose-6-phosphate isomerase like protein, domain 1"/>
    <property type="match status" value="2"/>
</dbReference>
<dbReference type="HAMAP" id="MF_00473">
    <property type="entry name" value="G6P_isomerase"/>
    <property type="match status" value="1"/>
</dbReference>
<dbReference type="InterPro" id="IPR001672">
    <property type="entry name" value="G6P_Isomerase"/>
</dbReference>
<dbReference type="InterPro" id="IPR023096">
    <property type="entry name" value="G6P_Isomerase_C"/>
</dbReference>
<dbReference type="InterPro" id="IPR018189">
    <property type="entry name" value="Phosphoglucose_isomerase_CS"/>
</dbReference>
<dbReference type="InterPro" id="IPR046348">
    <property type="entry name" value="SIS_dom_sf"/>
</dbReference>
<dbReference type="InterPro" id="IPR035476">
    <property type="entry name" value="SIS_PGI_1"/>
</dbReference>
<dbReference type="InterPro" id="IPR035482">
    <property type="entry name" value="SIS_PGI_2"/>
</dbReference>
<dbReference type="NCBIfam" id="NF001211">
    <property type="entry name" value="PRK00179.1"/>
    <property type="match status" value="1"/>
</dbReference>
<dbReference type="PANTHER" id="PTHR11469">
    <property type="entry name" value="GLUCOSE-6-PHOSPHATE ISOMERASE"/>
    <property type="match status" value="1"/>
</dbReference>
<dbReference type="PANTHER" id="PTHR11469:SF1">
    <property type="entry name" value="GLUCOSE-6-PHOSPHATE ISOMERASE"/>
    <property type="match status" value="1"/>
</dbReference>
<dbReference type="Pfam" id="PF00342">
    <property type="entry name" value="PGI"/>
    <property type="match status" value="1"/>
</dbReference>
<dbReference type="PRINTS" id="PR00662">
    <property type="entry name" value="G6PISOMERASE"/>
</dbReference>
<dbReference type="SUPFAM" id="SSF53697">
    <property type="entry name" value="SIS domain"/>
    <property type="match status" value="1"/>
</dbReference>
<dbReference type="PROSITE" id="PS00765">
    <property type="entry name" value="P_GLUCOSE_ISOMERASE_1"/>
    <property type="match status" value="1"/>
</dbReference>
<dbReference type="PROSITE" id="PS00174">
    <property type="entry name" value="P_GLUCOSE_ISOMERASE_2"/>
    <property type="match status" value="1"/>
</dbReference>
<dbReference type="PROSITE" id="PS51463">
    <property type="entry name" value="P_GLUCOSE_ISOMERASE_3"/>
    <property type="match status" value="1"/>
</dbReference>
<reference key="1">
    <citation type="journal article" date="1988" name="Nucleic Acids Res.">
        <title>The RAG2 gene of the yeast Kluyveromyces lactis codes for a putative phosphoglucose isomerase.</title>
        <authorList>
            <person name="Wesolowski-Louvel M."/>
            <person name="Goffrini P."/>
            <person name="Ferrero I."/>
        </authorList>
    </citation>
    <scope>NUCLEOTIDE SEQUENCE [GENOMIC DNA]</scope>
    <source>
        <strain>ATCC 76492 / CBS 2359/152 / CLIB 210</strain>
    </source>
</reference>
<reference key="2">
    <citation type="journal article" date="2004" name="Nature">
        <title>Genome evolution in yeasts.</title>
        <authorList>
            <person name="Dujon B."/>
            <person name="Sherman D."/>
            <person name="Fischer G."/>
            <person name="Durrens P."/>
            <person name="Casaregola S."/>
            <person name="Lafontaine I."/>
            <person name="de Montigny J."/>
            <person name="Marck C."/>
            <person name="Neuveglise C."/>
            <person name="Talla E."/>
            <person name="Goffard N."/>
            <person name="Frangeul L."/>
            <person name="Aigle M."/>
            <person name="Anthouard V."/>
            <person name="Babour A."/>
            <person name="Barbe V."/>
            <person name="Barnay S."/>
            <person name="Blanchin S."/>
            <person name="Beckerich J.-M."/>
            <person name="Beyne E."/>
            <person name="Bleykasten C."/>
            <person name="Boisrame A."/>
            <person name="Boyer J."/>
            <person name="Cattolico L."/>
            <person name="Confanioleri F."/>
            <person name="de Daruvar A."/>
            <person name="Despons L."/>
            <person name="Fabre E."/>
            <person name="Fairhead C."/>
            <person name="Ferry-Dumazet H."/>
            <person name="Groppi A."/>
            <person name="Hantraye F."/>
            <person name="Hennequin C."/>
            <person name="Jauniaux N."/>
            <person name="Joyet P."/>
            <person name="Kachouri R."/>
            <person name="Kerrest A."/>
            <person name="Koszul R."/>
            <person name="Lemaire M."/>
            <person name="Lesur I."/>
            <person name="Ma L."/>
            <person name="Muller H."/>
            <person name="Nicaud J.-M."/>
            <person name="Nikolski M."/>
            <person name="Oztas S."/>
            <person name="Ozier-Kalogeropoulos O."/>
            <person name="Pellenz S."/>
            <person name="Potier S."/>
            <person name="Richard G.-F."/>
            <person name="Straub M.-L."/>
            <person name="Suleau A."/>
            <person name="Swennen D."/>
            <person name="Tekaia F."/>
            <person name="Wesolowski-Louvel M."/>
            <person name="Westhof E."/>
            <person name="Wirth B."/>
            <person name="Zeniou-Meyer M."/>
            <person name="Zivanovic Y."/>
            <person name="Bolotin-Fukuhara M."/>
            <person name="Thierry A."/>
            <person name="Bouchier C."/>
            <person name="Caudron B."/>
            <person name="Scarpelli C."/>
            <person name="Gaillardin C."/>
            <person name="Weissenbach J."/>
            <person name="Wincker P."/>
            <person name="Souciet J.-L."/>
        </authorList>
    </citation>
    <scope>NUCLEOTIDE SEQUENCE [LARGE SCALE GENOMIC DNA]</scope>
    <source>
        <strain>ATCC 8585 / CBS 2359 / DSM 70799 / NBRC 1267 / NRRL Y-1140 / WM37</strain>
    </source>
</reference>
<reference key="3">
    <citation type="journal article" date="1991" name="Mol. Gen. Genet.">
        <title>A phosphoglucose isomerase gene is involved in the Rag phenotype of the yeast Kluyveromyces lactis.</title>
        <authorList>
            <person name="Goffrini P."/>
            <person name="Wesolowski-Louvel M."/>
            <person name="Ferrero I."/>
        </authorList>
    </citation>
    <scope>CHARACTERIZATION</scope>
</reference>
<organism>
    <name type="scientific">Kluyveromyces lactis (strain ATCC 8585 / CBS 2359 / DSM 70799 / NBRC 1267 / NRRL Y-1140 / WM37)</name>
    <name type="common">Yeast</name>
    <name type="synonym">Candida sphaerica</name>
    <dbReference type="NCBI Taxonomy" id="284590"/>
    <lineage>
        <taxon>Eukaryota</taxon>
        <taxon>Fungi</taxon>
        <taxon>Dikarya</taxon>
        <taxon>Ascomycota</taxon>
        <taxon>Saccharomycotina</taxon>
        <taxon>Saccharomycetes</taxon>
        <taxon>Saccharomycetales</taxon>
        <taxon>Saccharomycetaceae</taxon>
        <taxon>Kluyveromyces</taxon>
    </lineage>
</organism>
<name>G6PI_KLULA</name>
<gene>
    <name type="primary">RAG2</name>
    <name type="ordered locus">KLLA0E23595g</name>
</gene>
<sequence length="555" mass="61568">MASKNTYSDFKLATELPAWNQLQSLYEQKGKKLNVKDEFAKDNSRYEKFAKTFVNYDGSKILFDFSKNLVDDEILKSLIQLAKEAKVTSLRDAMFNGEPINFTEGRAVYHVALRNRSLKPMYVDGTNVTPEVDAVLQHMKEFTEEVRSGAWKGYTGKSITDVVNIGIGGSDLGPVMVTEALKHYATNLKVHFVSNIDGTHIAETLKDLDHETTLFLIASKTFTTAETITNATSAKNWFLSKNGGDQSHISKHFAALSTNATEVEKFGIDTKNMFGFENWVGGRYSVWSAIGLSVALYIGFDNFEAFLKGAEAVDKHFVETPLEDNIPLLGGLLSVWYNNFFDAQTHLVAPFDQYLHRFPAYLQQLSMESNGKSVTRGNVFANYSTGSILFGEPATNAQHSFFQLIHQGTKLIPSDFILAAQSHNPIENNLHQKMLASNFFAQAEALMVGKDEEQVKSEGATGGLVPHKVFSGNRPTTSILAQKITPATLGALIAYYEHVTFTEGAIWNINSFDQWGVELGKVLAKVIGSELATDNKISSHDSSTNGLINQFKEWI</sequence>
<proteinExistence type="evidence at protein level"/>
<comment type="function">
    <text evidence="1">In the cytoplasm, catalyzes the conversion of glucose-6-phosphate to fructose-6-phosphate, the second step in glycolysis, and the reverse reaction during gluconeogenesis.</text>
</comment>
<comment type="catalytic activity">
    <reaction evidence="1">
        <text>alpha-D-glucose 6-phosphate = beta-D-fructose 6-phosphate</text>
        <dbReference type="Rhea" id="RHEA:11816"/>
        <dbReference type="ChEBI" id="CHEBI:57634"/>
        <dbReference type="ChEBI" id="CHEBI:58225"/>
        <dbReference type="EC" id="5.3.1.9"/>
    </reaction>
</comment>
<comment type="pathway">
    <text evidence="4">Carbohydrate degradation; glycolysis; D-glyceraldehyde 3-phosphate and glycerone phosphate from D-glucose: step 2/4.</text>
</comment>
<comment type="subunit">
    <text evidence="1">Homodimer.</text>
</comment>
<comment type="subcellular location">
    <subcellularLocation>
        <location evidence="3">Cytoplasm</location>
        <location evidence="3">Cytosol</location>
    </subcellularLocation>
</comment>
<comment type="similarity">
    <text evidence="4">Belongs to the GPI family.</text>
</comment>
<accession>P12341</accession>
<accession>Q6CM26</accession>
<evidence type="ECO:0000250" key="1">
    <source>
        <dbReference type="UniProtKB" id="P06744"/>
    </source>
</evidence>
<evidence type="ECO:0000250" key="2">
    <source>
        <dbReference type="UniProtKB" id="P06745"/>
    </source>
</evidence>
<evidence type="ECO:0000250" key="3">
    <source>
        <dbReference type="UniProtKB" id="P78917"/>
    </source>
</evidence>
<evidence type="ECO:0000305" key="4"/>
<protein>
    <recommendedName>
        <fullName>Glucose-6-phosphate isomerase</fullName>
        <shortName>GPI</shortName>
        <ecNumber evidence="1">5.3.1.9</ecNumber>
    </recommendedName>
    <alternativeName>
        <fullName>Phosphoglucose isomerase</fullName>
        <shortName>PGI</shortName>
    </alternativeName>
    <alternativeName>
        <fullName>Phosphohexose isomerase</fullName>
        <shortName>PHI</shortName>
    </alternativeName>
</protein>
<feature type="chain" id="PRO_0000180575" description="Glucose-6-phosphate isomerase">
    <location>
        <begin position="1"/>
        <end position="555"/>
    </location>
</feature>
<feature type="active site" description="Proton donor" evidence="1">
    <location>
        <position position="368"/>
    </location>
</feature>
<feature type="active site" evidence="1">
    <location>
        <position position="399"/>
    </location>
</feature>
<feature type="active site" evidence="1">
    <location>
        <position position="521"/>
    </location>
</feature>
<feature type="binding site" evidence="2">
    <location>
        <begin position="169"/>
        <end position="170"/>
    </location>
    <ligand>
        <name>D-glucose 6-phosphate</name>
        <dbReference type="ChEBI" id="CHEBI:61548"/>
    </ligand>
</feature>
<feature type="binding site" evidence="2">
    <location>
        <begin position="219"/>
        <end position="224"/>
    </location>
    <ligand>
        <name>D-glucose 6-phosphate</name>
        <dbReference type="ChEBI" id="CHEBI:61548"/>
    </ligand>
</feature>
<feature type="binding site" evidence="2">
    <location>
        <position position="364"/>
    </location>
    <ligand>
        <name>D-glucose 6-phosphate</name>
        <dbReference type="ChEBI" id="CHEBI:61548"/>
    </ligand>
</feature>
<feature type="binding site" evidence="2">
    <location>
        <position position="368"/>
    </location>
    <ligand>
        <name>D-glucose 6-phosphate</name>
        <dbReference type="ChEBI" id="CHEBI:61548"/>
    </ligand>
</feature>
<feature type="binding site" evidence="2">
    <location>
        <position position="399"/>
    </location>
    <ligand>
        <name>D-glucose 6-phosphate</name>
        <dbReference type="ChEBI" id="CHEBI:61548"/>
    </ligand>
</feature>
<feature type="binding site" evidence="2">
    <location>
        <position position="521"/>
    </location>
    <ligand>
        <name>D-glucose 6-phosphate</name>
        <dbReference type="ChEBI" id="CHEBI:61548"/>
    </ligand>
</feature>
<feature type="sequence conflict" description="In Ref. 1; CAA30923." evidence="4" ref="1">
    <original>SA</original>
    <variation>QLEL</variation>
    <location>
        <begin position="233"/>
        <end position="234"/>
    </location>
</feature>
<feature type="sequence conflict" description="In Ref. 1; CAA30923." evidence="4" ref="1">
    <original>A</original>
    <variation>R</variation>
    <location>
        <position position="505"/>
    </location>
</feature>